<protein>
    <recommendedName>
        <fullName evidence="1">Protein PsiE</fullName>
    </recommendedName>
</protein>
<sequence length="136" mass="15567">MTSLSRPRVEFISTILQTVLNLGLLCLGLILVVFLGKETVHLADVLFAPEQASKYELVEGLVVYFLYFEFIALIVKYFQSGFHFPLRYFVYIGITAIVRLIIVDHKSPLDVLIYSAAILLLVITLWLCNSKRLKRE</sequence>
<keyword id="KW-0997">Cell inner membrane</keyword>
<keyword id="KW-1003">Cell membrane</keyword>
<keyword id="KW-0472">Membrane</keyword>
<keyword id="KW-1185">Reference proteome</keyword>
<keyword id="KW-0812">Transmembrane</keyword>
<keyword id="KW-1133">Transmembrane helix</keyword>
<evidence type="ECO:0000255" key="1">
    <source>
        <dbReference type="HAMAP-Rule" id="MF_01048"/>
    </source>
</evidence>
<feature type="chain" id="PRO_1000064312" description="Protein PsiE">
    <location>
        <begin position="1"/>
        <end position="136"/>
    </location>
</feature>
<feature type="transmembrane region" description="Helical" evidence="1">
    <location>
        <begin position="15"/>
        <end position="35"/>
    </location>
</feature>
<feature type="transmembrane region" description="Helical" evidence="1">
    <location>
        <begin position="55"/>
        <end position="75"/>
    </location>
</feature>
<feature type="transmembrane region" description="Helical" evidence="1">
    <location>
        <begin position="82"/>
        <end position="102"/>
    </location>
</feature>
<feature type="transmembrane region" description="Helical" evidence="1">
    <location>
        <begin position="108"/>
        <end position="128"/>
    </location>
</feature>
<accession>A1AIK9</accession>
<gene>
    <name evidence="1" type="primary">psiE</name>
    <name type="ordered locus">Ecok1_40050</name>
    <name type="ORF">APECO1_2437</name>
</gene>
<organism>
    <name type="scientific">Escherichia coli O1:K1 / APEC</name>
    <dbReference type="NCBI Taxonomy" id="405955"/>
    <lineage>
        <taxon>Bacteria</taxon>
        <taxon>Pseudomonadati</taxon>
        <taxon>Pseudomonadota</taxon>
        <taxon>Gammaproteobacteria</taxon>
        <taxon>Enterobacterales</taxon>
        <taxon>Enterobacteriaceae</taxon>
        <taxon>Escherichia</taxon>
    </lineage>
</organism>
<reference key="1">
    <citation type="journal article" date="2007" name="J. Bacteriol.">
        <title>The genome sequence of avian pathogenic Escherichia coli strain O1:K1:H7 shares strong similarities with human extraintestinal pathogenic E. coli genomes.</title>
        <authorList>
            <person name="Johnson T.J."/>
            <person name="Kariyawasam S."/>
            <person name="Wannemuehler Y."/>
            <person name="Mangiamele P."/>
            <person name="Johnson S.J."/>
            <person name="Doetkott C."/>
            <person name="Skyberg J.A."/>
            <person name="Lynne A.M."/>
            <person name="Johnson J.R."/>
            <person name="Nolan L.K."/>
        </authorList>
    </citation>
    <scope>NUCLEOTIDE SEQUENCE [LARGE SCALE GENOMIC DNA]</scope>
</reference>
<comment type="subcellular location">
    <subcellularLocation>
        <location evidence="1">Cell inner membrane</location>
        <topology evidence="1">Multi-pass membrane protein</topology>
    </subcellularLocation>
</comment>
<comment type="similarity">
    <text evidence="1">Belongs to the PsiE family.</text>
</comment>
<name>PSIE_ECOK1</name>
<dbReference type="EMBL" id="CP000468">
    <property type="protein sequence ID" value="ABJ03499.1"/>
    <property type="molecule type" value="Genomic_DNA"/>
</dbReference>
<dbReference type="RefSeq" id="WP_000202899.1">
    <property type="nucleotide sequence ID" value="NZ_CADILS010000008.1"/>
</dbReference>
<dbReference type="SMR" id="A1AIK9"/>
<dbReference type="KEGG" id="ecv:APECO1_2437"/>
<dbReference type="HOGENOM" id="CLU_127561_0_1_6"/>
<dbReference type="Proteomes" id="UP000008216">
    <property type="component" value="Chromosome"/>
</dbReference>
<dbReference type="GO" id="GO:0005886">
    <property type="term" value="C:plasma membrane"/>
    <property type="evidence" value="ECO:0007669"/>
    <property type="project" value="UniProtKB-SubCell"/>
</dbReference>
<dbReference type="GO" id="GO:0016036">
    <property type="term" value="P:cellular response to phosphate starvation"/>
    <property type="evidence" value="ECO:0007669"/>
    <property type="project" value="InterPro"/>
</dbReference>
<dbReference type="HAMAP" id="MF_01048">
    <property type="entry name" value="PsiE"/>
    <property type="match status" value="1"/>
</dbReference>
<dbReference type="InterPro" id="IPR009315">
    <property type="entry name" value="P_starv_induced_PsiE"/>
</dbReference>
<dbReference type="InterPro" id="IPR020948">
    <property type="entry name" value="P_starv_induced_PsiE-like"/>
</dbReference>
<dbReference type="NCBIfam" id="NF002764">
    <property type="entry name" value="PRK02833.1-2"/>
    <property type="match status" value="1"/>
</dbReference>
<dbReference type="NCBIfam" id="NF002765">
    <property type="entry name" value="PRK02833.1-3"/>
    <property type="match status" value="1"/>
</dbReference>
<dbReference type="NCBIfam" id="NF002767">
    <property type="entry name" value="PRK02833.1-5"/>
    <property type="match status" value="1"/>
</dbReference>
<dbReference type="PANTHER" id="PTHR37819">
    <property type="entry name" value="PROTEIN PSIE"/>
    <property type="match status" value="1"/>
</dbReference>
<dbReference type="PANTHER" id="PTHR37819:SF1">
    <property type="entry name" value="PROTEIN PSIE"/>
    <property type="match status" value="1"/>
</dbReference>
<dbReference type="Pfam" id="PF06146">
    <property type="entry name" value="PsiE"/>
    <property type="match status" value="1"/>
</dbReference>
<dbReference type="PIRSF" id="PIRSF029598">
    <property type="entry name" value="PsiE"/>
    <property type="match status" value="1"/>
</dbReference>
<proteinExistence type="inferred from homology"/>